<sequence length="100" mass="11199">MIREERLLKVLRAPHVSEKASTAMEKSNTIVLKVAKDATKAEIKAAVQKLFEVEVEVVNTLVVKGKVKRHGQRIGRRSDWKKAYVTLKEGQNLDFVGGAE</sequence>
<comment type="function">
    <text evidence="1">One of the early assembly proteins it binds 23S rRNA. One of the proteins that surrounds the polypeptide exit tunnel on the outside of the ribosome. Forms the main docking site for trigger factor binding to the ribosome.</text>
</comment>
<comment type="subunit">
    <text evidence="1">Part of the 50S ribosomal subunit. Contacts protein L29, and trigger factor when it is bound to the ribosome.</text>
</comment>
<comment type="similarity">
    <text evidence="1">Belongs to the universal ribosomal protein uL23 family.</text>
</comment>
<organism>
    <name type="scientific">Escherichia coli O6:H1 (strain CFT073 / ATCC 700928 / UPEC)</name>
    <dbReference type="NCBI Taxonomy" id="199310"/>
    <lineage>
        <taxon>Bacteria</taxon>
        <taxon>Pseudomonadati</taxon>
        <taxon>Pseudomonadota</taxon>
        <taxon>Gammaproteobacteria</taxon>
        <taxon>Enterobacterales</taxon>
        <taxon>Enterobacteriaceae</taxon>
        <taxon>Escherichia</taxon>
    </lineage>
</organism>
<name>RL23_ECOL6</name>
<gene>
    <name evidence="1" type="primary">rplW</name>
    <name type="ordered locus">c4087</name>
</gene>
<dbReference type="EMBL" id="AE014075">
    <property type="protein sequence ID" value="AAN82525.1"/>
    <property type="molecule type" value="Genomic_DNA"/>
</dbReference>
<dbReference type="RefSeq" id="WP_000617544.1">
    <property type="nucleotide sequence ID" value="NZ_CP051263.1"/>
</dbReference>
<dbReference type="SMR" id="P0ADZ1"/>
<dbReference type="STRING" id="199310.c4087"/>
<dbReference type="GeneID" id="93778669"/>
<dbReference type="KEGG" id="ecc:c4087"/>
<dbReference type="eggNOG" id="COG0089">
    <property type="taxonomic scope" value="Bacteria"/>
</dbReference>
<dbReference type="HOGENOM" id="CLU_037562_3_1_6"/>
<dbReference type="BioCyc" id="ECOL199310:C4087-MONOMER"/>
<dbReference type="Proteomes" id="UP000001410">
    <property type="component" value="Chromosome"/>
</dbReference>
<dbReference type="GO" id="GO:1990904">
    <property type="term" value="C:ribonucleoprotein complex"/>
    <property type="evidence" value="ECO:0007669"/>
    <property type="project" value="UniProtKB-KW"/>
</dbReference>
<dbReference type="GO" id="GO:0005840">
    <property type="term" value="C:ribosome"/>
    <property type="evidence" value="ECO:0007669"/>
    <property type="project" value="UniProtKB-KW"/>
</dbReference>
<dbReference type="GO" id="GO:0019843">
    <property type="term" value="F:rRNA binding"/>
    <property type="evidence" value="ECO:0007669"/>
    <property type="project" value="UniProtKB-UniRule"/>
</dbReference>
<dbReference type="GO" id="GO:0003735">
    <property type="term" value="F:structural constituent of ribosome"/>
    <property type="evidence" value="ECO:0007669"/>
    <property type="project" value="InterPro"/>
</dbReference>
<dbReference type="GO" id="GO:0006412">
    <property type="term" value="P:translation"/>
    <property type="evidence" value="ECO:0007669"/>
    <property type="project" value="UniProtKB-UniRule"/>
</dbReference>
<dbReference type="FunFam" id="3.30.70.330:FF:000001">
    <property type="entry name" value="50S ribosomal protein L23"/>
    <property type="match status" value="1"/>
</dbReference>
<dbReference type="Gene3D" id="3.30.70.330">
    <property type="match status" value="1"/>
</dbReference>
<dbReference type="HAMAP" id="MF_01369_B">
    <property type="entry name" value="Ribosomal_uL23_B"/>
    <property type="match status" value="1"/>
</dbReference>
<dbReference type="InterPro" id="IPR012677">
    <property type="entry name" value="Nucleotide-bd_a/b_plait_sf"/>
</dbReference>
<dbReference type="InterPro" id="IPR013025">
    <property type="entry name" value="Ribosomal_uL23-like"/>
</dbReference>
<dbReference type="InterPro" id="IPR012678">
    <property type="entry name" value="Ribosomal_uL23/eL15/eS24_sf"/>
</dbReference>
<dbReference type="InterPro" id="IPR001014">
    <property type="entry name" value="Ribosomal_uL23_CS"/>
</dbReference>
<dbReference type="NCBIfam" id="NF004358">
    <property type="entry name" value="PRK05738.1-1"/>
    <property type="match status" value="1"/>
</dbReference>
<dbReference type="NCBIfam" id="NF004359">
    <property type="entry name" value="PRK05738.1-3"/>
    <property type="match status" value="1"/>
</dbReference>
<dbReference type="NCBIfam" id="NF004363">
    <property type="entry name" value="PRK05738.2-4"/>
    <property type="match status" value="1"/>
</dbReference>
<dbReference type="PANTHER" id="PTHR11620">
    <property type="entry name" value="60S RIBOSOMAL PROTEIN L23A"/>
    <property type="match status" value="1"/>
</dbReference>
<dbReference type="Pfam" id="PF00276">
    <property type="entry name" value="Ribosomal_L23"/>
    <property type="match status" value="1"/>
</dbReference>
<dbReference type="SUPFAM" id="SSF54189">
    <property type="entry name" value="Ribosomal proteins S24e, L23 and L15e"/>
    <property type="match status" value="1"/>
</dbReference>
<dbReference type="PROSITE" id="PS00050">
    <property type="entry name" value="RIBOSOMAL_L23"/>
    <property type="match status" value="1"/>
</dbReference>
<keyword id="KW-1185">Reference proteome</keyword>
<keyword id="KW-0687">Ribonucleoprotein</keyword>
<keyword id="KW-0689">Ribosomal protein</keyword>
<keyword id="KW-0694">RNA-binding</keyword>
<keyword id="KW-0699">rRNA-binding</keyword>
<feature type="chain" id="PRO_0000129409" description="Large ribosomal subunit protein uL23">
    <location>
        <begin position="1"/>
        <end position="100"/>
    </location>
</feature>
<proteinExistence type="inferred from homology"/>
<protein>
    <recommendedName>
        <fullName evidence="1">Large ribosomal subunit protein uL23</fullName>
    </recommendedName>
    <alternativeName>
        <fullName evidence="2">50S ribosomal protein L23</fullName>
    </alternativeName>
</protein>
<reference key="1">
    <citation type="journal article" date="2002" name="Proc. Natl. Acad. Sci. U.S.A.">
        <title>Extensive mosaic structure revealed by the complete genome sequence of uropathogenic Escherichia coli.</title>
        <authorList>
            <person name="Welch R.A."/>
            <person name="Burland V."/>
            <person name="Plunkett G. III"/>
            <person name="Redford P."/>
            <person name="Roesch P."/>
            <person name="Rasko D."/>
            <person name="Buckles E.L."/>
            <person name="Liou S.-R."/>
            <person name="Boutin A."/>
            <person name="Hackett J."/>
            <person name="Stroud D."/>
            <person name="Mayhew G.F."/>
            <person name="Rose D.J."/>
            <person name="Zhou S."/>
            <person name="Schwartz D.C."/>
            <person name="Perna N.T."/>
            <person name="Mobley H.L.T."/>
            <person name="Donnenberg M.S."/>
            <person name="Blattner F.R."/>
        </authorList>
    </citation>
    <scope>NUCLEOTIDE SEQUENCE [LARGE SCALE GENOMIC DNA]</scope>
    <source>
        <strain>CFT073 / ATCC 700928 / UPEC</strain>
    </source>
</reference>
<evidence type="ECO:0000255" key="1">
    <source>
        <dbReference type="HAMAP-Rule" id="MF_01369"/>
    </source>
</evidence>
<evidence type="ECO:0000305" key="2"/>
<accession>P0ADZ1</accession>
<accession>P02424</accession>